<sequence length="282" mass="32832">MANQLILLKKDFFTDEQQAVTVADRYPQDVFAEHTHEFCELVMVWRGNGLHVLNERPYRITRGDLFYIRAEDKHSYTSVNDLVLQNIIYCPERLKLNVNWQAMIPGFQGAQWHPHWRLGSMGMNQARQVINQLEHESNGRDPLANEMAELLFGQLVMTLKRHRYATDDLPATSRETLLDKLITALANSLESSFALDAFCQQEQCSERVLRQQFRAQTGMTINQYLRQVRICHAQYLLQHSPLMISEISMQCGFEDSNYFSVVFTRETGMTPSQWRHLSNQSD</sequence>
<gene>
    <name evidence="1" type="primary">rhaR</name>
    <name type="ordered locus">SeD_A4444</name>
</gene>
<evidence type="ECO:0000255" key="1">
    <source>
        <dbReference type="HAMAP-Rule" id="MF_01533"/>
    </source>
</evidence>
<keyword id="KW-0010">Activator</keyword>
<keyword id="KW-0963">Cytoplasm</keyword>
<keyword id="KW-0238">DNA-binding</keyword>
<keyword id="KW-0677">Repeat</keyword>
<keyword id="KW-0684">Rhamnose metabolism</keyword>
<keyword id="KW-0804">Transcription</keyword>
<keyword id="KW-0805">Transcription regulation</keyword>
<dbReference type="EMBL" id="CP001144">
    <property type="protein sequence ID" value="ACH75442.1"/>
    <property type="molecule type" value="Genomic_DNA"/>
</dbReference>
<dbReference type="RefSeq" id="WP_000013293.1">
    <property type="nucleotide sequence ID" value="NC_011205.1"/>
</dbReference>
<dbReference type="SMR" id="B5FPP6"/>
<dbReference type="KEGG" id="sed:SeD_A4444"/>
<dbReference type="HOGENOM" id="CLU_000445_88_5_6"/>
<dbReference type="Proteomes" id="UP000008322">
    <property type="component" value="Chromosome"/>
</dbReference>
<dbReference type="GO" id="GO:0005737">
    <property type="term" value="C:cytoplasm"/>
    <property type="evidence" value="ECO:0007669"/>
    <property type="project" value="UniProtKB-SubCell"/>
</dbReference>
<dbReference type="GO" id="GO:0003700">
    <property type="term" value="F:DNA-binding transcription factor activity"/>
    <property type="evidence" value="ECO:0007669"/>
    <property type="project" value="UniProtKB-UniRule"/>
</dbReference>
<dbReference type="GO" id="GO:0043565">
    <property type="term" value="F:sequence-specific DNA binding"/>
    <property type="evidence" value="ECO:0007669"/>
    <property type="project" value="InterPro"/>
</dbReference>
<dbReference type="GO" id="GO:0045893">
    <property type="term" value="P:positive regulation of DNA-templated transcription"/>
    <property type="evidence" value="ECO:0007669"/>
    <property type="project" value="UniProtKB-UniRule"/>
</dbReference>
<dbReference type="GO" id="GO:0019299">
    <property type="term" value="P:rhamnose metabolic process"/>
    <property type="evidence" value="ECO:0007669"/>
    <property type="project" value="UniProtKB-UniRule"/>
</dbReference>
<dbReference type="CDD" id="cd06977">
    <property type="entry name" value="cupin_RhaR_RhaS-like_N"/>
    <property type="match status" value="1"/>
</dbReference>
<dbReference type="Gene3D" id="1.10.10.60">
    <property type="entry name" value="Homeodomain-like"/>
    <property type="match status" value="1"/>
</dbReference>
<dbReference type="Gene3D" id="2.60.120.10">
    <property type="entry name" value="Jelly Rolls"/>
    <property type="match status" value="1"/>
</dbReference>
<dbReference type="HAMAP" id="MF_01533">
    <property type="entry name" value="HTH_type_RhaR"/>
    <property type="match status" value="1"/>
</dbReference>
<dbReference type="InterPro" id="IPR003313">
    <property type="entry name" value="AraC-bd"/>
</dbReference>
<dbReference type="InterPro" id="IPR009057">
    <property type="entry name" value="Homeodomain-like_sf"/>
</dbReference>
<dbReference type="InterPro" id="IPR018060">
    <property type="entry name" value="HTH_AraC"/>
</dbReference>
<dbReference type="InterPro" id="IPR018062">
    <property type="entry name" value="HTH_AraC-typ_CS"/>
</dbReference>
<dbReference type="InterPro" id="IPR047220">
    <property type="entry name" value="RhaR_RhaS-like_N"/>
</dbReference>
<dbReference type="InterPro" id="IPR014710">
    <property type="entry name" value="RmlC-like_jellyroll"/>
</dbReference>
<dbReference type="InterPro" id="IPR011051">
    <property type="entry name" value="RmlC_Cupin_sf"/>
</dbReference>
<dbReference type="InterPro" id="IPR023699">
    <property type="entry name" value="Tscrpt_act_RhaR"/>
</dbReference>
<dbReference type="InterPro" id="IPR020449">
    <property type="entry name" value="Tscrpt_reg_AraC-type_HTH"/>
</dbReference>
<dbReference type="NCBIfam" id="NF010025">
    <property type="entry name" value="PRK13500.1"/>
    <property type="match status" value="1"/>
</dbReference>
<dbReference type="NCBIfam" id="NF010026">
    <property type="entry name" value="PRK13501.1"/>
    <property type="match status" value="1"/>
</dbReference>
<dbReference type="NCBIfam" id="NF010027">
    <property type="entry name" value="PRK13502.1"/>
    <property type="match status" value="1"/>
</dbReference>
<dbReference type="PANTHER" id="PTHR43280">
    <property type="entry name" value="ARAC-FAMILY TRANSCRIPTIONAL REGULATOR"/>
    <property type="match status" value="1"/>
</dbReference>
<dbReference type="PANTHER" id="PTHR43280:SF13">
    <property type="entry name" value="HTH-TYPE TRANSCRIPTIONAL ACTIVATOR RHAR"/>
    <property type="match status" value="1"/>
</dbReference>
<dbReference type="Pfam" id="PF02311">
    <property type="entry name" value="AraC_binding"/>
    <property type="match status" value="1"/>
</dbReference>
<dbReference type="Pfam" id="PF12833">
    <property type="entry name" value="HTH_18"/>
    <property type="match status" value="1"/>
</dbReference>
<dbReference type="PRINTS" id="PR00032">
    <property type="entry name" value="HTHARAC"/>
</dbReference>
<dbReference type="SMART" id="SM00342">
    <property type="entry name" value="HTH_ARAC"/>
    <property type="match status" value="1"/>
</dbReference>
<dbReference type="SUPFAM" id="SSF46689">
    <property type="entry name" value="Homeodomain-like"/>
    <property type="match status" value="1"/>
</dbReference>
<dbReference type="SUPFAM" id="SSF51182">
    <property type="entry name" value="RmlC-like cupins"/>
    <property type="match status" value="1"/>
</dbReference>
<dbReference type="PROSITE" id="PS00041">
    <property type="entry name" value="HTH_ARAC_FAMILY_1"/>
    <property type="match status" value="1"/>
</dbReference>
<dbReference type="PROSITE" id="PS01124">
    <property type="entry name" value="HTH_ARAC_FAMILY_2"/>
    <property type="match status" value="1"/>
</dbReference>
<feature type="chain" id="PRO_1000200939" description="HTH-type transcriptional activator RhaR">
    <location>
        <begin position="1"/>
        <end position="282"/>
    </location>
</feature>
<feature type="domain" description="HTH araC/xylS-type" evidence="1">
    <location>
        <begin position="179"/>
        <end position="277"/>
    </location>
</feature>
<feature type="DNA-binding region" description="H-T-H motif" evidence="1">
    <location>
        <begin position="196"/>
        <end position="217"/>
    </location>
</feature>
<feature type="DNA-binding region" description="H-T-H motif" evidence="1">
    <location>
        <begin position="244"/>
        <end position="267"/>
    </location>
</feature>
<feature type="site" description="Interaction with sigma-70" evidence="1">
    <location>
        <position position="246"/>
    </location>
</feature>
<organism>
    <name type="scientific">Salmonella dublin (strain CT_02021853)</name>
    <dbReference type="NCBI Taxonomy" id="439851"/>
    <lineage>
        <taxon>Bacteria</taxon>
        <taxon>Pseudomonadati</taxon>
        <taxon>Pseudomonadota</taxon>
        <taxon>Gammaproteobacteria</taxon>
        <taxon>Enterobacterales</taxon>
        <taxon>Enterobacteriaceae</taxon>
        <taxon>Salmonella</taxon>
    </lineage>
</organism>
<proteinExistence type="inferred from homology"/>
<protein>
    <recommendedName>
        <fullName evidence="1">HTH-type transcriptional activator RhaR</fullName>
    </recommendedName>
    <alternativeName>
        <fullName evidence="1">L-rhamnose operon transcriptional activator RhaR</fullName>
    </alternativeName>
</protein>
<name>RHAR_SALDC</name>
<reference key="1">
    <citation type="journal article" date="2011" name="J. Bacteriol.">
        <title>Comparative genomics of 28 Salmonella enterica isolates: evidence for CRISPR-mediated adaptive sublineage evolution.</title>
        <authorList>
            <person name="Fricke W.F."/>
            <person name="Mammel M.K."/>
            <person name="McDermott P.F."/>
            <person name="Tartera C."/>
            <person name="White D.G."/>
            <person name="Leclerc J.E."/>
            <person name="Ravel J."/>
            <person name="Cebula T.A."/>
        </authorList>
    </citation>
    <scope>NUCLEOTIDE SEQUENCE [LARGE SCALE GENOMIC DNA]</scope>
    <source>
        <strain>CT_02021853</strain>
    </source>
</reference>
<comment type="function">
    <text evidence="1">Activates expression of the rhaSR operon in response to L-rhamnose.</text>
</comment>
<comment type="subunit">
    <text evidence="1">Binds DNA as a dimer.</text>
</comment>
<comment type="subcellular location">
    <subcellularLocation>
        <location evidence="1">Cytoplasm</location>
    </subcellularLocation>
</comment>
<accession>B5FPP6</accession>